<protein>
    <recommendedName>
        <fullName evidence="1">UPF0102 protein TWT_455</fullName>
    </recommendedName>
</protein>
<evidence type="ECO:0000255" key="1">
    <source>
        <dbReference type="HAMAP-Rule" id="MF_00048"/>
    </source>
</evidence>
<evidence type="ECO:0000305" key="2"/>
<proteinExistence type="inferred from homology"/>
<feature type="chain" id="PRO_0000167387" description="UPF0102 protein TWT_455">
    <location>
        <begin position="1"/>
        <end position="120"/>
    </location>
</feature>
<gene>
    <name type="ordered locus">TWT_455</name>
</gene>
<reference key="1">
    <citation type="journal article" date="2003" name="Genome Res.">
        <title>Tropheryma whipplei twist: a human pathogenic Actinobacteria with a reduced genome.</title>
        <authorList>
            <person name="Raoult D."/>
            <person name="Ogata H."/>
            <person name="Audic S."/>
            <person name="Robert C."/>
            <person name="Suhre K."/>
            <person name="Drancourt M."/>
            <person name="Claverie J.-M."/>
        </authorList>
    </citation>
    <scope>NUCLEOTIDE SEQUENCE [LARGE SCALE GENOMIC DNA]</scope>
    <source>
        <strain>Twist</strain>
    </source>
</reference>
<comment type="similarity">
    <text evidence="1">Belongs to the UPF0102 family.</text>
</comment>
<comment type="sequence caution" evidence="2">
    <conflict type="erroneous initiation">
        <sequence resource="EMBL-CDS" id="AAO44552"/>
    </conflict>
</comment>
<keyword id="KW-1185">Reference proteome</keyword>
<dbReference type="EMBL" id="AE014184">
    <property type="protein sequence ID" value="AAO44552.1"/>
    <property type="status" value="ALT_INIT"/>
    <property type="molecule type" value="Genomic_DNA"/>
</dbReference>
<dbReference type="SMR" id="Q83G68"/>
<dbReference type="STRING" id="203267.TWT_455"/>
<dbReference type="KEGG" id="twh:TWT_455"/>
<dbReference type="eggNOG" id="COG0792">
    <property type="taxonomic scope" value="Bacteria"/>
</dbReference>
<dbReference type="HOGENOM" id="CLU_1502854_0_0_11"/>
<dbReference type="Proteomes" id="UP000002200">
    <property type="component" value="Chromosome"/>
</dbReference>
<dbReference type="GO" id="GO:0003676">
    <property type="term" value="F:nucleic acid binding"/>
    <property type="evidence" value="ECO:0007669"/>
    <property type="project" value="InterPro"/>
</dbReference>
<dbReference type="Gene3D" id="3.40.1350.10">
    <property type="match status" value="1"/>
</dbReference>
<dbReference type="HAMAP" id="MF_00048">
    <property type="entry name" value="UPF0102"/>
    <property type="match status" value="1"/>
</dbReference>
<dbReference type="InterPro" id="IPR011335">
    <property type="entry name" value="Restrct_endonuc-II-like"/>
</dbReference>
<dbReference type="InterPro" id="IPR011856">
    <property type="entry name" value="tRNA_endonuc-like_dom_sf"/>
</dbReference>
<dbReference type="InterPro" id="IPR003509">
    <property type="entry name" value="UPF0102_YraN-like"/>
</dbReference>
<dbReference type="NCBIfam" id="NF009152">
    <property type="entry name" value="PRK12497.2-4"/>
    <property type="match status" value="1"/>
</dbReference>
<dbReference type="PANTHER" id="PTHR34039">
    <property type="entry name" value="UPF0102 PROTEIN YRAN"/>
    <property type="match status" value="1"/>
</dbReference>
<dbReference type="PANTHER" id="PTHR34039:SF1">
    <property type="entry name" value="UPF0102 PROTEIN YRAN"/>
    <property type="match status" value="1"/>
</dbReference>
<dbReference type="Pfam" id="PF02021">
    <property type="entry name" value="UPF0102"/>
    <property type="match status" value="1"/>
</dbReference>
<dbReference type="SUPFAM" id="SSF52980">
    <property type="entry name" value="Restriction endonuclease-like"/>
    <property type="match status" value="1"/>
</dbReference>
<accession>Q83G68</accession>
<name>Y455_TROWT</name>
<organism>
    <name type="scientific">Tropheryma whipplei (strain Twist)</name>
    <name type="common">Whipple's bacillus</name>
    <dbReference type="NCBI Taxonomy" id="203267"/>
    <lineage>
        <taxon>Bacteria</taxon>
        <taxon>Bacillati</taxon>
        <taxon>Actinomycetota</taxon>
        <taxon>Actinomycetes</taxon>
        <taxon>Micrococcales</taxon>
        <taxon>Tropherymataceae</taxon>
        <taxon>Tropheryma</taxon>
    </lineage>
</organism>
<sequence>MTHDVSKYALGRIAEDKACDYLSVNGYIVLDRNWYCRFGELDIIARKNGVIVAVEVKGGKRNADYPICNITVKKLSKLTFLLKAWLHENKLNEFCIDLRIDAISVTFIPELQIRHFVGIL</sequence>